<evidence type="ECO:0000255" key="1"/>
<evidence type="ECO:0000305" key="2"/>
<sequence length="247" mass="26419">MSITAQSVYRDTGNFFRNQFMTILLVSLLCAFITVVLGHVFSPSDAQLAQLNDGVPVSGSSGLFDLVQNMSPEQQQILLQASAASTFSGLIGNAILAGGVILIIQLVSAGQRVSALRAIGASAPILPKLFILIFLTTLLVQIGIMLVVVPGIIMAILLALAPVMLVQDKMGVFASMRSSMRLTWANMRLVAPAVLSWLLAKTLLLLFASSFAALTPEIGAVLANTLSNLISAILLIYLFRLYMLIRQ</sequence>
<comment type="subcellular location">
    <subcellularLocation>
        <location>Cell inner membrane</location>
        <topology>Multi-pass membrane protein</topology>
    </subcellularLocation>
</comment>
<comment type="similarity">
    <text evidence="2">Belongs to the UPF0259 family.</text>
</comment>
<reference key="1">
    <citation type="journal article" date="1988" name="Genetics">
        <title>Molecular evolution of the Escherichia coli chromosome. I. Analysis of structure and natural variation in a previously uncharacterized region between trp and tonB.</title>
        <authorList>
            <person name="Stoltzfus A."/>
            <person name="Leslie J.F."/>
            <person name="Milkman R."/>
        </authorList>
    </citation>
    <scope>NUCLEOTIDE SEQUENCE [GENOMIC DNA]</scope>
    <source>
        <strain>K12</strain>
    </source>
</reference>
<reference key="2">
    <citation type="submission" date="1995-04" db="EMBL/GenBank/DDBJ databases">
        <authorList>
            <person name="Milkman R."/>
        </authorList>
    </citation>
    <scope>NUCLEOTIDE SEQUENCE [GENOMIC DNA]</scope>
    <source>
        <strain>ECOR 1</strain>
        <strain>ECOR 16</strain>
        <strain>ECOR 28</strain>
        <strain>ECOR 31</strain>
        <strain>ECOR 37</strain>
        <strain>ECOR 4</strain>
        <strain>ECOR 46</strain>
        <strain>ECOR 52</strain>
        <strain>ECOR 60</strain>
        <strain>ECOR 71</strain>
        <strain>K12</strain>
        <strain>O2:HN / ECOR 50 / P97 / UPEC</strain>
    </source>
</reference>
<reference key="3">
    <citation type="journal article" date="1996" name="DNA Res.">
        <title>A 570-kb DNA sequence of the Escherichia coli K-12 genome corresponding to the 28.0-40.1 min region on the linkage map.</title>
        <authorList>
            <person name="Aiba H."/>
            <person name="Baba T."/>
            <person name="Fujita K."/>
            <person name="Hayashi K."/>
            <person name="Inada T."/>
            <person name="Isono K."/>
            <person name="Itoh T."/>
            <person name="Kasai H."/>
            <person name="Kashimoto K."/>
            <person name="Kimura S."/>
            <person name="Kitakawa M."/>
            <person name="Kitagawa M."/>
            <person name="Makino K."/>
            <person name="Miki T."/>
            <person name="Mizobuchi K."/>
            <person name="Mori H."/>
            <person name="Mori T."/>
            <person name="Motomura K."/>
            <person name="Nakade S."/>
            <person name="Nakamura Y."/>
            <person name="Nashimoto H."/>
            <person name="Nishio Y."/>
            <person name="Oshima T."/>
            <person name="Saito N."/>
            <person name="Sampei G."/>
            <person name="Seki Y."/>
            <person name="Sivasundaram S."/>
            <person name="Tagami H."/>
            <person name="Takeda J."/>
            <person name="Takemoto K."/>
            <person name="Takeuchi Y."/>
            <person name="Wada C."/>
            <person name="Yamamoto Y."/>
            <person name="Horiuchi T."/>
        </authorList>
    </citation>
    <scope>NUCLEOTIDE SEQUENCE [LARGE SCALE GENOMIC DNA]</scope>
    <source>
        <strain>K12 / W3110 / ATCC 27325 / DSM 5911</strain>
    </source>
</reference>
<reference key="4">
    <citation type="journal article" date="1997" name="Science">
        <title>The complete genome sequence of Escherichia coli K-12.</title>
        <authorList>
            <person name="Blattner F.R."/>
            <person name="Plunkett G. III"/>
            <person name="Bloch C.A."/>
            <person name="Perna N.T."/>
            <person name="Burland V."/>
            <person name="Riley M."/>
            <person name="Collado-Vides J."/>
            <person name="Glasner J.D."/>
            <person name="Rode C.K."/>
            <person name="Mayhew G.F."/>
            <person name="Gregor J."/>
            <person name="Davis N.W."/>
            <person name="Kirkpatrick H.A."/>
            <person name="Goeden M.A."/>
            <person name="Rose D.J."/>
            <person name="Mau B."/>
            <person name="Shao Y."/>
        </authorList>
    </citation>
    <scope>NUCLEOTIDE SEQUENCE [LARGE SCALE GENOMIC DNA]</scope>
    <source>
        <strain>K12 / MG1655 / ATCC 47076</strain>
    </source>
</reference>
<reference key="5">
    <citation type="journal article" date="2006" name="Mol. Syst. Biol.">
        <title>Highly accurate genome sequences of Escherichia coli K-12 strains MG1655 and W3110.</title>
        <authorList>
            <person name="Hayashi K."/>
            <person name="Morooka N."/>
            <person name="Yamamoto Y."/>
            <person name="Fujita K."/>
            <person name="Isono K."/>
            <person name="Choi S."/>
            <person name="Ohtsubo E."/>
            <person name="Baba T."/>
            <person name="Wanner B.L."/>
            <person name="Mori H."/>
            <person name="Horiuchi T."/>
        </authorList>
    </citation>
    <scope>NUCLEOTIDE SEQUENCE [LARGE SCALE GENOMIC DNA]</scope>
    <source>
        <strain>K12 / W3110 / ATCC 27325 / DSM 5911</strain>
    </source>
</reference>
<reference key="6">
    <citation type="journal article" date="2005" name="Science">
        <title>Global topology analysis of the Escherichia coli inner membrane proteome.</title>
        <authorList>
            <person name="Daley D.O."/>
            <person name="Rapp M."/>
            <person name="Granseth E."/>
            <person name="Melen K."/>
            <person name="Drew D."/>
            <person name="von Heijne G."/>
        </authorList>
    </citation>
    <scope>TOPOLOGY [LARGE SCALE ANALYSIS]</scope>
    <source>
        <strain>K12 / MG1655 / ATCC 47076</strain>
    </source>
</reference>
<name>YCIC_ECOLI</name>
<gene>
    <name type="primary">yciC</name>
    <name type="ordered locus">b1255</name>
    <name type="ordered locus">JW1247</name>
</gene>
<proteinExistence type="evidence at protein level"/>
<organism>
    <name type="scientific">Escherichia coli (strain K12)</name>
    <dbReference type="NCBI Taxonomy" id="83333"/>
    <lineage>
        <taxon>Bacteria</taxon>
        <taxon>Pseudomonadati</taxon>
        <taxon>Pseudomonadota</taxon>
        <taxon>Gammaproteobacteria</taxon>
        <taxon>Enterobacterales</taxon>
        <taxon>Enterobacteriaceae</taxon>
        <taxon>Escherichia</taxon>
    </lineage>
</organism>
<dbReference type="EMBL" id="X13583">
    <property type="protein sequence ID" value="CAA31923.1"/>
    <property type="molecule type" value="Genomic_DNA"/>
</dbReference>
<dbReference type="EMBL" id="U24195">
    <property type="protein sequence ID" value="AAB60066.1"/>
    <property type="molecule type" value="Genomic_DNA"/>
</dbReference>
<dbReference type="EMBL" id="U24196">
    <property type="protein sequence ID" value="AAB60074.1"/>
    <property type="molecule type" value="Genomic_DNA"/>
</dbReference>
<dbReference type="EMBL" id="U24197">
    <property type="protein sequence ID" value="AAB60082.1"/>
    <property type="molecule type" value="Genomic_DNA"/>
</dbReference>
<dbReference type="EMBL" id="U24198">
    <property type="protein sequence ID" value="AAB60090.1"/>
    <property type="molecule type" value="Genomic_DNA"/>
</dbReference>
<dbReference type="EMBL" id="U24199">
    <property type="protein sequence ID" value="AAB60098.1"/>
    <property type="molecule type" value="Genomic_DNA"/>
</dbReference>
<dbReference type="EMBL" id="U24200">
    <property type="protein sequence ID" value="AAB60106.1"/>
    <property type="molecule type" value="Genomic_DNA"/>
</dbReference>
<dbReference type="EMBL" id="U24201">
    <property type="protein sequence ID" value="AAB60114.1"/>
    <property type="molecule type" value="Genomic_DNA"/>
</dbReference>
<dbReference type="EMBL" id="U24202">
    <property type="protein sequence ID" value="AAB60122.1"/>
    <property type="molecule type" value="Genomic_DNA"/>
</dbReference>
<dbReference type="EMBL" id="U24203">
    <property type="protein sequence ID" value="AAB60130.1"/>
    <property type="molecule type" value="Genomic_DNA"/>
</dbReference>
<dbReference type="EMBL" id="U24204">
    <property type="protein sequence ID" value="AAB60138.1"/>
    <property type="molecule type" value="Genomic_DNA"/>
</dbReference>
<dbReference type="EMBL" id="U24205">
    <property type="protein sequence ID" value="AAB60146.1"/>
    <property type="molecule type" value="Genomic_DNA"/>
</dbReference>
<dbReference type="EMBL" id="U24206">
    <property type="protein sequence ID" value="AAB60154.1"/>
    <property type="molecule type" value="Genomic_DNA"/>
</dbReference>
<dbReference type="EMBL" id="U00096">
    <property type="protein sequence ID" value="AAC74337.1"/>
    <property type="molecule type" value="Genomic_DNA"/>
</dbReference>
<dbReference type="EMBL" id="AP009048">
    <property type="protein sequence ID" value="BAA14787.1"/>
    <property type="molecule type" value="Genomic_DNA"/>
</dbReference>
<dbReference type="PIR" id="B64873">
    <property type="entry name" value="B64873"/>
</dbReference>
<dbReference type="PIR" id="T45502">
    <property type="entry name" value="T45502"/>
</dbReference>
<dbReference type="RefSeq" id="NP_415771.1">
    <property type="nucleotide sequence ID" value="NC_000913.3"/>
</dbReference>
<dbReference type="RefSeq" id="WP_000028545.1">
    <property type="nucleotide sequence ID" value="NZ_LN832404.1"/>
</dbReference>
<dbReference type="BioGRID" id="4262999">
    <property type="interactions" value="21"/>
</dbReference>
<dbReference type="FunCoup" id="P21365">
    <property type="interactions" value="30"/>
</dbReference>
<dbReference type="STRING" id="511145.b1255"/>
<dbReference type="PaxDb" id="511145-b1255"/>
<dbReference type="EnsemblBacteria" id="AAC74337">
    <property type="protein sequence ID" value="AAC74337"/>
    <property type="gene ID" value="b1255"/>
</dbReference>
<dbReference type="GeneID" id="945844"/>
<dbReference type="KEGG" id="ecj:JW1247"/>
<dbReference type="KEGG" id="eco:b1255"/>
<dbReference type="KEGG" id="ecoc:C3026_07370"/>
<dbReference type="PATRIC" id="fig|1411691.4.peg.1028"/>
<dbReference type="EchoBASE" id="EB1113"/>
<dbReference type="eggNOG" id="ENOG502Z96Y">
    <property type="taxonomic scope" value="Bacteria"/>
</dbReference>
<dbReference type="HOGENOM" id="CLU_073287_0_0_6"/>
<dbReference type="InParanoid" id="P21365"/>
<dbReference type="OMA" id="PGLWLMV"/>
<dbReference type="OrthoDB" id="6454524at2"/>
<dbReference type="PhylomeDB" id="P21365"/>
<dbReference type="BioCyc" id="EcoCyc:EG11123-MONOMER"/>
<dbReference type="PRO" id="PR:P21365"/>
<dbReference type="Proteomes" id="UP000000625">
    <property type="component" value="Chromosome"/>
</dbReference>
<dbReference type="GO" id="GO:0005886">
    <property type="term" value="C:plasma membrane"/>
    <property type="evidence" value="ECO:0000314"/>
    <property type="project" value="EcoCyc"/>
</dbReference>
<dbReference type="HAMAP" id="MF_01067">
    <property type="entry name" value="UPF0259"/>
    <property type="match status" value="1"/>
</dbReference>
<dbReference type="InterPro" id="IPR009627">
    <property type="entry name" value="UPF0259"/>
</dbReference>
<dbReference type="NCBIfam" id="NF002774">
    <property type="entry name" value="PRK02868.1"/>
    <property type="match status" value="1"/>
</dbReference>
<dbReference type="Pfam" id="PF06790">
    <property type="entry name" value="UPF0259"/>
    <property type="match status" value="1"/>
</dbReference>
<keyword id="KW-0997">Cell inner membrane</keyword>
<keyword id="KW-1003">Cell membrane</keyword>
<keyword id="KW-0472">Membrane</keyword>
<keyword id="KW-1185">Reference proteome</keyword>
<keyword id="KW-0812">Transmembrane</keyword>
<keyword id="KW-1133">Transmembrane helix</keyword>
<protein>
    <recommendedName>
        <fullName>UPF0259 membrane protein YciC</fullName>
    </recommendedName>
</protein>
<feature type="chain" id="PRO_0000206514" description="UPF0259 membrane protein YciC">
    <location>
        <begin position="1"/>
        <end position="247"/>
    </location>
</feature>
<feature type="topological domain" description="Cytoplasmic" evidence="1">
    <location>
        <begin position="1"/>
        <end position="19"/>
    </location>
</feature>
<feature type="transmembrane region" description="Helical" evidence="1">
    <location>
        <begin position="20"/>
        <end position="40"/>
    </location>
</feature>
<feature type="topological domain" description="Periplasmic" evidence="1">
    <location>
        <begin position="41"/>
        <end position="86"/>
    </location>
</feature>
<feature type="transmembrane region" description="Helical" evidence="1">
    <location>
        <begin position="87"/>
        <end position="107"/>
    </location>
</feature>
<feature type="topological domain" description="Cytoplasmic" evidence="1">
    <location>
        <begin position="108"/>
        <end position="117"/>
    </location>
</feature>
<feature type="transmembrane region" description="Helical" evidence="1">
    <location>
        <begin position="118"/>
        <end position="140"/>
    </location>
</feature>
<feature type="topological domain" description="Periplasmic" evidence="1">
    <location>
        <begin position="141"/>
        <end position="151"/>
    </location>
</feature>
<feature type="transmembrane region" description="Helical" evidence="1">
    <location>
        <begin position="152"/>
        <end position="172"/>
    </location>
</feature>
<feature type="topological domain" description="Cytoplasmic" evidence="1">
    <location>
        <begin position="173"/>
        <end position="186"/>
    </location>
</feature>
<feature type="transmembrane region" description="Helical" evidence="1">
    <location>
        <begin position="187"/>
        <end position="209"/>
    </location>
</feature>
<feature type="topological domain" description="Periplasmic" evidence="1">
    <location>
        <begin position="210"/>
        <end position="224"/>
    </location>
</feature>
<feature type="transmembrane region" description="Helical" evidence="1">
    <location>
        <begin position="225"/>
        <end position="245"/>
    </location>
</feature>
<feature type="topological domain" description="Cytoplasmic" evidence="1">
    <location>
        <begin position="246"/>
        <end position="247"/>
    </location>
</feature>
<feature type="sequence variant" description="In strain: ECOR 52.">
    <original>V</original>
    <variation>I</variation>
    <location>
        <position position="26"/>
    </location>
</feature>
<feature type="sequence variant" description="In strain: ECOR 31.">
    <original>A</original>
    <variation>V</variation>
    <location>
        <position position="46"/>
    </location>
</feature>
<feature type="sequence variant" description="In strain: ECOR 16.">
    <original>D</original>
    <variation>N</variation>
    <location>
        <position position="65"/>
    </location>
</feature>
<feature type="sequence variant" description="In strain: ECOR 60.">
    <original>I</original>
    <variation>V</variation>
    <location>
        <position position="119"/>
    </location>
</feature>
<feature type="sequence variant" description="In strain: ECOR 16, ECOR 28, ECOR 31, ECOR 37, ECOR 50 and ECOR 71.">
    <original>V</original>
    <variation>I</variation>
    <location>
        <position position="172"/>
    </location>
</feature>
<feature type="sequence variant" description="In strain: ECOR 31, ECOR 46, ECOR 50, ECOR 52 and ECOR 60.">
    <original>I</original>
    <variation>V</variation>
    <location>
        <position position="233"/>
    </location>
</feature>
<feature type="sequence conflict" description="In Ref. 1 and 2." evidence="2" ref="1 2">
    <original>VILIIQLVSAGQRVS</original>
    <variation>RNINYPAGVCGSESQ</variation>
    <location>
        <begin position="100"/>
        <end position="114"/>
    </location>
</feature>
<feature type="sequence conflict" description="In Ref. 1 and 2." evidence="2" ref="1 2">
    <original>A</original>
    <variation>T</variation>
    <location>
        <position position="191"/>
    </location>
</feature>
<feature type="sequence conflict" description="In Ref. 1 and 2." evidence="2" ref="1 2">
    <original>T</original>
    <variation>P</variation>
    <location>
        <position position="202"/>
    </location>
</feature>
<accession>P21365</accession>
<accession>P77207</accession>
<accession>P94718</accession>
<accession>P94724</accession>
<accession>P94727</accession>
<accession>P94731</accession>
<accession>P94734</accession>
<accession>P94737</accession>
<accession>P97230</accession>